<sequence length="165" mass="18259">MAENQQAAGNENQNQPQFALQRIYVKDLSFESPNSPLVFQEQWKPQVNLDLNTSHNKISDNQYEVVLSLTVTAKVGEKVAYIVEIQQGGVFMISGIEGPQLGQMLGAYCPTILFPYAREAIDGIVNKGSFPALMLAPVNFDAIYAQALKRKQEEAAGEAKEEQTH</sequence>
<keyword id="KW-0143">Chaperone</keyword>
<keyword id="KW-0963">Cytoplasm</keyword>
<keyword id="KW-0653">Protein transport</keyword>
<keyword id="KW-0811">Translocation</keyword>
<keyword id="KW-0813">Transport</keyword>
<dbReference type="EMBL" id="CP000514">
    <property type="protein sequence ID" value="ABM20238.1"/>
    <property type="molecule type" value="Genomic_DNA"/>
</dbReference>
<dbReference type="RefSeq" id="WP_011786606.1">
    <property type="nucleotide sequence ID" value="NC_008740.1"/>
</dbReference>
<dbReference type="SMR" id="A1U5G9"/>
<dbReference type="STRING" id="351348.Maqu_3164"/>
<dbReference type="KEGG" id="maq:Maqu_3164"/>
<dbReference type="eggNOG" id="COG1952">
    <property type="taxonomic scope" value="Bacteria"/>
</dbReference>
<dbReference type="HOGENOM" id="CLU_111574_1_0_6"/>
<dbReference type="OrthoDB" id="9795145at2"/>
<dbReference type="Proteomes" id="UP000000998">
    <property type="component" value="Chromosome"/>
</dbReference>
<dbReference type="GO" id="GO:0005737">
    <property type="term" value="C:cytoplasm"/>
    <property type="evidence" value="ECO:0007669"/>
    <property type="project" value="UniProtKB-SubCell"/>
</dbReference>
<dbReference type="GO" id="GO:0051082">
    <property type="term" value="F:unfolded protein binding"/>
    <property type="evidence" value="ECO:0007669"/>
    <property type="project" value="InterPro"/>
</dbReference>
<dbReference type="GO" id="GO:0006457">
    <property type="term" value="P:protein folding"/>
    <property type="evidence" value="ECO:0007669"/>
    <property type="project" value="UniProtKB-UniRule"/>
</dbReference>
<dbReference type="GO" id="GO:0051262">
    <property type="term" value="P:protein tetramerization"/>
    <property type="evidence" value="ECO:0007669"/>
    <property type="project" value="InterPro"/>
</dbReference>
<dbReference type="GO" id="GO:0015031">
    <property type="term" value="P:protein transport"/>
    <property type="evidence" value="ECO:0007669"/>
    <property type="project" value="UniProtKB-UniRule"/>
</dbReference>
<dbReference type="Gene3D" id="3.10.420.10">
    <property type="entry name" value="SecB-like"/>
    <property type="match status" value="1"/>
</dbReference>
<dbReference type="HAMAP" id="MF_00821">
    <property type="entry name" value="SecB"/>
    <property type="match status" value="1"/>
</dbReference>
<dbReference type="InterPro" id="IPR003708">
    <property type="entry name" value="SecB"/>
</dbReference>
<dbReference type="InterPro" id="IPR035958">
    <property type="entry name" value="SecB-like_sf"/>
</dbReference>
<dbReference type="NCBIfam" id="NF004392">
    <property type="entry name" value="PRK05751.1-3"/>
    <property type="match status" value="1"/>
</dbReference>
<dbReference type="NCBIfam" id="NF004393">
    <property type="entry name" value="PRK05751.1-4"/>
    <property type="match status" value="1"/>
</dbReference>
<dbReference type="NCBIfam" id="TIGR00809">
    <property type="entry name" value="secB"/>
    <property type="match status" value="1"/>
</dbReference>
<dbReference type="PANTHER" id="PTHR36918">
    <property type="match status" value="1"/>
</dbReference>
<dbReference type="PANTHER" id="PTHR36918:SF1">
    <property type="entry name" value="PROTEIN-EXPORT PROTEIN SECB"/>
    <property type="match status" value="1"/>
</dbReference>
<dbReference type="Pfam" id="PF02556">
    <property type="entry name" value="SecB"/>
    <property type="match status" value="1"/>
</dbReference>
<dbReference type="PRINTS" id="PR01594">
    <property type="entry name" value="SECBCHAPRONE"/>
</dbReference>
<dbReference type="SUPFAM" id="SSF54611">
    <property type="entry name" value="SecB-like"/>
    <property type="match status" value="1"/>
</dbReference>
<protein>
    <recommendedName>
        <fullName evidence="1">Protein-export protein SecB</fullName>
    </recommendedName>
</protein>
<evidence type="ECO:0000255" key="1">
    <source>
        <dbReference type="HAMAP-Rule" id="MF_00821"/>
    </source>
</evidence>
<comment type="function">
    <text evidence="1">One of the proteins required for the normal export of preproteins out of the cell cytoplasm. It is a molecular chaperone that binds to a subset of precursor proteins, maintaining them in a translocation-competent state. It also specifically binds to its receptor SecA.</text>
</comment>
<comment type="subunit">
    <text evidence="1">Homotetramer, a dimer of dimers. One homotetramer interacts with 1 SecA dimer.</text>
</comment>
<comment type="subcellular location">
    <subcellularLocation>
        <location evidence="1">Cytoplasm</location>
    </subcellularLocation>
</comment>
<comment type="similarity">
    <text evidence="1">Belongs to the SecB family.</text>
</comment>
<name>SECB_MARN8</name>
<reference key="1">
    <citation type="journal article" date="2011" name="Appl. Environ. Microbiol.">
        <title>Genomic potential of Marinobacter aquaeolei, a biogeochemical 'opportunitroph'.</title>
        <authorList>
            <person name="Singer E."/>
            <person name="Webb E.A."/>
            <person name="Nelson W.C."/>
            <person name="Heidelberg J.F."/>
            <person name="Ivanova N."/>
            <person name="Pati A."/>
            <person name="Edwards K.J."/>
        </authorList>
    </citation>
    <scope>NUCLEOTIDE SEQUENCE [LARGE SCALE GENOMIC DNA]</scope>
    <source>
        <strain>ATCC 700491 / DSM 11845 / VT8</strain>
    </source>
</reference>
<gene>
    <name evidence="1" type="primary">secB</name>
    <name type="ordered locus">Maqu_3164</name>
</gene>
<proteinExistence type="inferred from homology"/>
<feature type="chain" id="PRO_0000318245" description="Protein-export protein SecB">
    <location>
        <begin position="1"/>
        <end position="165"/>
    </location>
</feature>
<accession>A1U5G9</accession>
<organism>
    <name type="scientific">Marinobacter nauticus (strain ATCC 700491 / DSM 11845 / VT8)</name>
    <name type="common">Marinobacter aquaeolei</name>
    <dbReference type="NCBI Taxonomy" id="351348"/>
    <lineage>
        <taxon>Bacteria</taxon>
        <taxon>Pseudomonadati</taxon>
        <taxon>Pseudomonadota</taxon>
        <taxon>Gammaproteobacteria</taxon>
        <taxon>Pseudomonadales</taxon>
        <taxon>Marinobacteraceae</taxon>
        <taxon>Marinobacter</taxon>
    </lineage>
</organism>